<name>RUVA_SYNP6</name>
<sequence>MIGYLQGSLAGVRKQSGRLLLLLDVQGVGYEVQTPARSLVELPAAGQSLQVFTHLQVREDQWLLFGFLQMAERDLFRQLISVSGIGPQLGLALLDSLSLAELVQAIVAGNTRLLSRTPGVGAKTAERLALELRSKLAEWREEAGLLPSATAAPIAAVQEDVEMTLLALGYNNREILQALTAIAQENLVQSGQPAEDWIREAIAWLSR</sequence>
<dbReference type="EMBL" id="AP008231">
    <property type="protein sequence ID" value="BAD79992.1"/>
    <property type="molecule type" value="Genomic_DNA"/>
</dbReference>
<dbReference type="RefSeq" id="WP_011244112.1">
    <property type="nucleotide sequence ID" value="NZ_CP085785.1"/>
</dbReference>
<dbReference type="SMR" id="Q5N128"/>
<dbReference type="GeneID" id="72431184"/>
<dbReference type="KEGG" id="syc:syc1802_c"/>
<dbReference type="eggNOG" id="COG0632">
    <property type="taxonomic scope" value="Bacteria"/>
</dbReference>
<dbReference type="Proteomes" id="UP000001175">
    <property type="component" value="Chromosome"/>
</dbReference>
<dbReference type="GO" id="GO:0005737">
    <property type="term" value="C:cytoplasm"/>
    <property type="evidence" value="ECO:0007669"/>
    <property type="project" value="UniProtKB-SubCell"/>
</dbReference>
<dbReference type="GO" id="GO:0009379">
    <property type="term" value="C:Holliday junction helicase complex"/>
    <property type="evidence" value="ECO:0007669"/>
    <property type="project" value="InterPro"/>
</dbReference>
<dbReference type="GO" id="GO:0048476">
    <property type="term" value="C:Holliday junction resolvase complex"/>
    <property type="evidence" value="ECO:0007669"/>
    <property type="project" value="UniProtKB-UniRule"/>
</dbReference>
<dbReference type="GO" id="GO:0005524">
    <property type="term" value="F:ATP binding"/>
    <property type="evidence" value="ECO:0007669"/>
    <property type="project" value="InterPro"/>
</dbReference>
<dbReference type="GO" id="GO:0000400">
    <property type="term" value="F:four-way junction DNA binding"/>
    <property type="evidence" value="ECO:0007669"/>
    <property type="project" value="UniProtKB-UniRule"/>
</dbReference>
<dbReference type="GO" id="GO:0009378">
    <property type="term" value="F:four-way junction helicase activity"/>
    <property type="evidence" value="ECO:0007669"/>
    <property type="project" value="InterPro"/>
</dbReference>
<dbReference type="GO" id="GO:0006310">
    <property type="term" value="P:DNA recombination"/>
    <property type="evidence" value="ECO:0007669"/>
    <property type="project" value="UniProtKB-UniRule"/>
</dbReference>
<dbReference type="GO" id="GO:0006281">
    <property type="term" value="P:DNA repair"/>
    <property type="evidence" value="ECO:0007669"/>
    <property type="project" value="UniProtKB-UniRule"/>
</dbReference>
<dbReference type="CDD" id="cd14332">
    <property type="entry name" value="UBA_RuvA_C"/>
    <property type="match status" value="1"/>
</dbReference>
<dbReference type="Gene3D" id="1.10.150.20">
    <property type="entry name" value="5' to 3' exonuclease, C-terminal subdomain"/>
    <property type="match status" value="1"/>
</dbReference>
<dbReference type="Gene3D" id="2.40.50.140">
    <property type="entry name" value="Nucleic acid-binding proteins"/>
    <property type="match status" value="1"/>
</dbReference>
<dbReference type="HAMAP" id="MF_00031">
    <property type="entry name" value="DNA_HJ_migration_RuvA"/>
    <property type="match status" value="1"/>
</dbReference>
<dbReference type="InterPro" id="IPR013849">
    <property type="entry name" value="DNA_helicase_Holl-junc_RuvA_I"/>
</dbReference>
<dbReference type="InterPro" id="IPR003583">
    <property type="entry name" value="Hlx-hairpin-Hlx_DNA-bd_motif"/>
</dbReference>
<dbReference type="InterPro" id="IPR012340">
    <property type="entry name" value="NA-bd_OB-fold"/>
</dbReference>
<dbReference type="InterPro" id="IPR000085">
    <property type="entry name" value="RuvA"/>
</dbReference>
<dbReference type="InterPro" id="IPR010994">
    <property type="entry name" value="RuvA_2-like"/>
</dbReference>
<dbReference type="InterPro" id="IPR011114">
    <property type="entry name" value="RuvA_C"/>
</dbReference>
<dbReference type="InterPro" id="IPR036267">
    <property type="entry name" value="RuvA_C_sf"/>
</dbReference>
<dbReference type="NCBIfam" id="TIGR00084">
    <property type="entry name" value="ruvA"/>
    <property type="match status" value="1"/>
</dbReference>
<dbReference type="Pfam" id="PF14520">
    <property type="entry name" value="HHH_5"/>
    <property type="match status" value="1"/>
</dbReference>
<dbReference type="Pfam" id="PF07499">
    <property type="entry name" value="RuvA_C"/>
    <property type="match status" value="1"/>
</dbReference>
<dbReference type="Pfam" id="PF01330">
    <property type="entry name" value="RuvA_N"/>
    <property type="match status" value="1"/>
</dbReference>
<dbReference type="SMART" id="SM00278">
    <property type="entry name" value="HhH1"/>
    <property type="match status" value="2"/>
</dbReference>
<dbReference type="SUPFAM" id="SSF46929">
    <property type="entry name" value="DNA helicase RuvA subunit, C-terminal domain"/>
    <property type="match status" value="1"/>
</dbReference>
<dbReference type="SUPFAM" id="SSF50249">
    <property type="entry name" value="Nucleic acid-binding proteins"/>
    <property type="match status" value="1"/>
</dbReference>
<dbReference type="SUPFAM" id="SSF47781">
    <property type="entry name" value="RuvA domain 2-like"/>
    <property type="match status" value="1"/>
</dbReference>
<accession>Q5N128</accession>
<proteinExistence type="inferred from homology"/>
<keyword id="KW-0963">Cytoplasm</keyword>
<keyword id="KW-0227">DNA damage</keyword>
<keyword id="KW-0233">DNA recombination</keyword>
<keyword id="KW-0234">DNA repair</keyword>
<keyword id="KW-0238">DNA-binding</keyword>
<feature type="chain" id="PRO_0000224917" description="Holliday junction branch migration complex subunit RuvA">
    <location>
        <begin position="1"/>
        <end position="207"/>
    </location>
</feature>
<feature type="region of interest" description="Domain I" evidence="1">
    <location>
        <begin position="1"/>
        <end position="68"/>
    </location>
</feature>
<feature type="region of interest" description="Domain II" evidence="1">
    <location>
        <begin position="69"/>
        <end position="147"/>
    </location>
</feature>
<feature type="region of interest" description="Flexible linker" evidence="1">
    <location>
        <begin position="148"/>
        <end position="158"/>
    </location>
</feature>
<feature type="region of interest" description="Domain III" evidence="1">
    <location>
        <begin position="158"/>
        <end position="207"/>
    </location>
</feature>
<organism>
    <name type="scientific">Synechococcus sp. (strain ATCC 27144 / PCC 6301 / SAUG 1402/1)</name>
    <name type="common">Anacystis nidulans</name>
    <dbReference type="NCBI Taxonomy" id="269084"/>
    <lineage>
        <taxon>Bacteria</taxon>
        <taxon>Bacillati</taxon>
        <taxon>Cyanobacteriota</taxon>
        <taxon>Cyanophyceae</taxon>
        <taxon>Synechococcales</taxon>
        <taxon>Synechococcaceae</taxon>
        <taxon>Synechococcus</taxon>
    </lineage>
</organism>
<protein>
    <recommendedName>
        <fullName evidence="1">Holliday junction branch migration complex subunit RuvA</fullName>
    </recommendedName>
</protein>
<comment type="function">
    <text evidence="1">The RuvA-RuvB-RuvC complex processes Holliday junction (HJ) DNA during genetic recombination and DNA repair, while the RuvA-RuvB complex plays an important role in the rescue of blocked DNA replication forks via replication fork reversal (RFR). RuvA specifically binds to HJ cruciform DNA, conferring on it an open structure. The RuvB hexamer acts as an ATP-dependent pump, pulling dsDNA into and through the RuvAB complex. HJ branch migration allows RuvC to scan DNA until it finds its consensus sequence, where it cleaves and resolves the cruciform DNA.</text>
</comment>
<comment type="subunit">
    <text evidence="1">Homotetramer. Forms an RuvA(8)-RuvB(12)-Holliday junction (HJ) complex. HJ DNA is sandwiched between 2 RuvA tetramers; dsDNA enters through RuvA and exits via RuvB. An RuvB hexamer assembles on each DNA strand where it exits the tetramer. Each RuvB hexamer is contacted by two RuvA subunits (via domain III) on 2 adjacent RuvB subunits; this complex drives branch migration. In the full resolvosome a probable DNA-RuvA(4)-RuvB(12)-RuvC(2) complex forms which resolves the HJ.</text>
</comment>
<comment type="subcellular location">
    <subcellularLocation>
        <location evidence="1">Cytoplasm</location>
    </subcellularLocation>
</comment>
<comment type="domain">
    <text evidence="1">Has three domains with a flexible linker between the domains II and III and assumes an 'L' shape. Domain III is highly mobile and contacts RuvB.</text>
</comment>
<comment type="similarity">
    <text evidence="1">Belongs to the RuvA family.</text>
</comment>
<reference key="1">
    <citation type="journal article" date="2007" name="Photosyn. Res.">
        <title>Complete nucleotide sequence of the freshwater unicellular cyanobacterium Synechococcus elongatus PCC 6301 chromosome: gene content and organization.</title>
        <authorList>
            <person name="Sugita C."/>
            <person name="Ogata K."/>
            <person name="Shikata M."/>
            <person name="Jikuya H."/>
            <person name="Takano J."/>
            <person name="Furumichi M."/>
            <person name="Kanehisa M."/>
            <person name="Omata T."/>
            <person name="Sugiura M."/>
            <person name="Sugita M."/>
        </authorList>
    </citation>
    <scope>NUCLEOTIDE SEQUENCE [LARGE SCALE GENOMIC DNA]</scope>
    <source>
        <strain>ATCC 27144 / PCC 6301 / SAUG 1402/1</strain>
    </source>
</reference>
<gene>
    <name evidence="1" type="primary">ruvA</name>
    <name type="ordered locus">syc1802_c</name>
</gene>
<evidence type="ECO:0000255" key="1">
    <source>
        <dbReference type="HAMAP-Rule" id="MF_00031"/>
    </source>
</evidence>